<reference key="1">
    <citation type="submission" date="1999-12" db="EMBL/GenBank/DDBJ databases">
        <title>Identification of alpha and beta subunit isoforms of a phospholipase A2 inhibitor isolated from four species of Elapidae.</title>
        <authorList>
            <person name="Sekuloski S."/>
            <person name="Dunn R.D."/>
            <person name="Broady K.W."/>
        </authorList>
    </citation>
    <scope>NUCLEOTIDE SEQUENCE [MRNA]</scope>
    <source>
        <tissue>Liver</tissue>
    </source>
</reference>
<reference key="2">
    <citation type="journal article" date="2000" name="J. Biol. Chem.">
        <title>Functional characteristics of a phospholipase A(2) inhibitor from Notechis ater serum.</title>
        <authorList>
            <person name="Hains P.G."/>
            <person name="Sung K.L."/>
            <person name="Tseng A."/>
            <person name="Broady K.W."/>
        </authorList>
    </citation>
    <scope>PROTEIN SEQUENCE OF 20-48</scope>
    <scope>SUBCELLULAR LOCATION</scope>
    <scope>FUNCTION</scope>
    <scope>SUBUNIT</scope>
    <scope>BIOPHYSICOCHEMICAL PROPERTIES</scope>
    <source>
        <tissue>Serum</tissue>
    </source>
</reference>
<accession>Q78CF9</accession>
<feature type="signal peptide" evidence="2">
    <location>
        <begin position="1"/>
        <end position="19"/>
    </location>
</feature>
<feature type="chain" id="PRO_5004287583" description="Phospholipase A2 inhibitor NAI" evidence="5">
    <location>
        <begin position="20"/>
        <end position="200"/>
    </location>
</feature>
<feature type="disulfide bond" evidence="1">
    <location>
        <begin position="22"/>
        <end position="46"/>
    </location>
</feature>
<feature type="disulfide bond" evidence="1">
    <location>
        <begin position="25"/>
        <end position="32"/>
    </location>
</feature>
<feature type="disulfide bond" evidence="1">
    <location>
        <begin position="39"/>
        <end position="67"/>
    </location>
</feature>
<feature type="disulfide bond" evidence="1">
    <location>
        <begin position="73"/>
        <end position="94"/>
    </location>
</feature>
<feature type="disulfide bond" evidence="1">
    <location>
        <begin position="95"/>
        <end position="100"/>
    </location>
</feature>
<feature type="disulfide bond" evidence="1">
    <location>
        <begin position="120"/>
        <end position="145"/>
    </location>
</feature>
<feature type="disulfide bond" evidence="4">
    <location>
        <begin position="138"/>
        <end position="165"/>
    </location>
</feature>
<feature type="disulfide bond" evidence="1">
    <location>
        <begin position="171"/>
        <end position="191"/>
    </location>
</feature>
<organism>
    <name type="scientific">Notechis ater</name>
    <name type="common">Black tiger snake</name>
    <dbReference type="NCBI Taxonomy" id="111176"/>
    <lineage>
        <taxon>Eukaryota</taxon>
        <taxon>Metazoa</taxon>
        <taxon>Chordata</taxon>
        <taxon>Craniata</taxon>
        <taxon>Vertebrata</taxon>
        <taxon>Euteleostomi</taxon>
        <taxon>Lepidosauria</taxon>
        <taxon>Squamata</taxon>
        <taxon>Bifurcata</taxon>
        <taxon>Unidentata</taxon>
        <taxon>Episquamata</taxon>
        <taxon>Toxicofera</taxon>
        <taxon>Serpentes</taxon>
        <taxon>Colubroidea</taxon>
        <taxon>Elapidae</taxon>
        <taxon>Hydrophiinae</taxon>
        <taxon>Notechis</taxon>
    </lineage>
</organism>
<sequence length="200" mass="21904">MKSLLFCCLFGTFLATGMCLECEICIGLGLECNTWTKTCDANQDTCVTFQTEVIRAPVSLSLISKSCGTSDTCHLNYVETSPHNELTVKTKRTCCTGEECKTLPPPVLGHKVNPPNGLQCPGCLGLSSKECTEHLVSCRGSENQCLSIIGKEFGLFFRALSYKGCATESLCTLFEKRFWNVLEDVEVDFKCTPALPKSSQ</sequence>
<protein>
    <recommendedName>
        <fullName evidence="4">Phospholipase A2 inhibitor NAI</fullName>
    </recommendedName>
    <alternativeName>
        <fullName evidence="3">Notechis ater inhibitor</fullName>
        <shortName evidence="3">NAI</shortName>
    </alternativeName>
    <alternativeName>
        <fullName>gamma-PLI</fullName>
    </alternativeName>
</protein>
<comment type="function">
    <text evidence="2">Inhibits the enzymatic activity of all phospholipase A2 tested, binding with micromole to nanomole affinity.</text>
</comment>
<comment type="biophysicochemical properties">
    <phDependence>
        <text evidence="2">Optimum pH is 4-12. Important decrease in activity at pH 2.</text>
    </phDependence>
    <temperatureDependence>
        <text evidence="2">Optimum temperature is 4-90 degrees Celsius. Weak decrease in activity at 100 degrees Celsius.</text>
    </temperatureDependence>
</comment>
<comment type="subunit">
    <text evidence="5">Heterotrimer of 2 subunits A and 1 subunit B; non-covalently linked.</text>
</comment>
<comment type="subcellular location">
    <subcellularLocation>
        <location evidence="2">Secreted</location>
    </subcellularLocation>
    <text evidence="5">Secreted in blood plasma.</text>
</comment>
<comment type="tissue specificity">
    <text evidence="6">Expressed by the liver.</text>
</comment>
<comment type="similarity">
    <text evidence="4">Belongs to the CNF-like-inhibitor family.</text>
</comment>
<evidence type="ECO:0000250" key="1">
    <source>
        <dbReference type="UniProtKB" id="Q7LZI1"/>
    </source>
</evidence>
<evidence type="ECO:0000269" key="2">
    <source>
    </source>
</evidence>
<evidence type="ECO:0000303" key="3">
    <source>
    </source>
</evidence>
<evidence type="ECO:0000305" key="4"/>
<evidence type="ECO:0000305" key="5">
    <source>
    </source>
</evidence>
<evidence type="ECO:0000305" key="6">
    <source ref="1"/>
</evidence>
<proteinExistence type="evidence at protein level"/>
<name>PLIGB_NOTAT</name>
<dbReference type="EMBL" id="AF211155">
    <property type="protein sequence ID" value="AAF21046.1"/>
    <property type="molecule type" value="mRNA"/>
</dbReference>
<dbReference type="GO" id="GO:0005576">
    <property type="term" value="C:extracellular region"/>
    <property type="evidence" value="ECO:0007669"/>
    <property type="project" value="UniProtKB-SubCell"/>
</dbReference>
<dbReference type="GO" id="GO:0019834">
    <property type="term" value="F:phospholipase A2 inhibitor activity"/>
    <property type="evidence" value="ECO:0007669"/>
    <property type="project" value="UniProtKB-KW"/>
</dbReference>
<dbReference type="CDD" id="cd23572">
    <property type="entry name" value="TFP_LU_ECD_PINLYP_rpt2"/>
    <property type="match status" value="1"/>
</dbReference>
<dbReference type="CDD" id="cd23630">
    <property type="entry name" value="TFP_LU_ECD_PLIGB"/>
    <property type="match status" value="1"/>
</dbReference>
<dbReference type="Gene3D" id="2.10.60.10">
    <property type="entry name" value="CD59"/>
    <property type="match status" value="2"/>
</dbReference>
<dbReference type="InterPro" id="IPR050918">
    <property type="entry name" value="CNF-like_PLA2_Inhibitor"/>
</dbReference>
<dbReference type="InterPro" id="IPR016054">
    <property type="entry name" value="LY6_UPA_recep-like"/>
</dbReference>
<dbReference type="InterPro" id="IPR016338">
    <property type="entry name" value="PLipase_A2-inh_b-type"/>
</dbReference>
<dbReference type="InterPro" id="IPR004126">
    <property type="entry name" value="PLipase_A2_inh_N"/>
</dbReference>
<dbReference type="InterPro" id="IPR045860">
    <property type="entry name" value="Snake_toxin-like_sf"/>
</dbReference>
<dbReference type="PANTHER" id="PTHR20914">
    <property type="entry name" value="LY6/PLAUR DOMAIN-CONTAINING PROTEIN 8"/>
    <property type="match status" value="1"/>
</dbReference>
<dbReference type="PANTHER" id="PTHR20914:SF30">
    <property type="entry name" value="LY6_PLAUR DOMAIN CONTAINING 9"/>
    <property type="match status" value="1"/>
</dbReference>
<dbReference type="Pfam" id="PF02988">
    <property type="entry name" value="PLA2_inh"/>
    <property type="match status" value="1"/>
</dbReference>
<dbReference type="Pfam" id="PF00021">
    <property type="entry name" value="UPAR_LY6"/>
    <property type="match status" value="1"/>
</dbReference>
<dbReference type="PIRSF" id="PIRSF002023">
    <property type="entry name" value="PLA2_inhib_alpha/gamma"/>
    <property type="match status" value="1"/>
</dbReference>
<dbReference type="SUPFAM" id="SSF57302">
    <property type="entry name" value="Snake toxin-like"/>
    <property type="match status" value="2"/>
</dbReference>
<keyword id="KW-0903">Direct protein sequencing</keyword>
<keyword id="KW-1015">Disulfide bond</keyword>
<keyword id="KW-0593">Phospholipase A2 inhibitor</keyword>
<keyword id="KW-0964">Secreted</keyword>
<keyword id="KW-0732">Signal</keyword>